<sequence>MAVDSSMELLFLDTFKHPSAEQSSHIDVVRFPCVVYINEVRVIPPGVRAHSGLPDNRAYGETSPHTFQLDLFFNNVSKPSAPVFDRLGSLEYDENTSIIFRPNSKVNTDGLVLRGWYNCLTLAIYGSVDRVISHDRDSPPPPPPPPPPPQPQPTLKRNLKHADGEKEDQFNGSPPRPQPRGPRTPPGPPPPDDDEDDPMSLPVSGDKEEDVPHREDYFEPISPDRNSVPQEGQYSDEGEVEEEPQEEGEDDEDDVDVEEEEDEDEDDCHTVDSIPDDEEEDEEEEGEEDEEGEGDDGYEQISSDEDGIADLERETFKYPNFDVEYTPEDLASVPPMTYDPYDRELAPLLYFSCPYKTTFEIEISRMKDQGPDKENSGAVEASVKLTELLDLYQEDRGAKWVTALEEIPSLIIKGLSYLQLKNTEQDSLGQLVDWTMQALNLQVAFRQPIALNVRQLKAGTKLVTSLAECGAPGVTELLQAGVINVLFDLLFADHVSSSLKLNAFKALDSVISMTEGMEAFLRSTQNEKSGYQRLLELILLDQTVRVVTAGSAILQKCHFYEILSEIKRLGDHIAEKTSAVPNHSEPDQDTDAVLERANPDYENEVEASMDMDLLESSIISEGEIEKLTNLLEEVFHVMETAPHTMTQPPVKSFPTIARITGPPERDDPYPVLFRYLHSHHFLELVTLLLSIPITSAHQGVLQATKDVLKFLAQSQKGLLFFMSEYEATNLLIRALCHLYDQDEEEGLQSDGADDAFALWLQDSTQTLQCITELFSHFQRCTASEETDHSDLLGTLHNLYLITFNPVGRSAVGHVFSLDKNLQSLITLMEYYSKEALGDSKSKKSVAYNYACVLTLVVAQSSSGVQMLEQHAASLLKLCKADENNAKLQELGKWLEPLKNLRFEINCIPNLIEYVKQNIDNLMTAEGVGLTTALRVLCNVACPPPPVEGQQKDLKWNLAVIQLFSAEGMDTFIRVLQKLNSILTQPWRLHVNMGTTLHRVTTISMARCTLTLLKTMLTELLRGGSFEFKDMRVPSALVTLHMLLCSIPLSGRLDSDEQKIQNDIIDILLTFTQGVNEKLTISEETLANNTWSLMLKEVLSSILKVPEGFFSGLILLSELLPLPLPMQTTQVIEPHDISVALNTRKLWSMHLHVQAKLLQEIVRSFSGTTCQPIQHMLRRICVQLCDLASPTALLIMRTVLDLIVEDLQSTSEDKEKQYTSQTTRLLALLDALASHKACKLAILHLINGTIKGDERYAEIFQDLLALVRSPGDSVTRQQCVEYVTSILQSLCDQDIALILPSPSEGPASELEQLSNSLPSKELMTAICDCLLATLANSESSYNCLLTCVRTMMFLAEHDYGLFHLKSSLRKNSSALHSLLKRVVSTFSKDTGELASASLDFMRQILNADAMGCCGDDSGLMEVEGAHPPRTMSLNAAELKQLLQSKEESPESLFLELEKLVLEHSKDDDSLESLLDNVIGLKQMLESSGEPLPLSDQDVEPVLSAPESLQNLFNNRTAYVLADVMDDQLKSMWFTPFQAEEIDTDLDLVKVDLIELSEKCCSDFDLHSELERSFLSEPSSPGRSKTTKGFKLGKHKHETFITSSGKSEYIEPAKRAHVVPPPRGRGRGGFGQGIRPHDIFRQRKQNTSRPPSMHVDDFVAAESKEVVPQDGIPPPKRPLKVSQKISSRGGFSGNRGGRGAFHSQNRFFTPPASKGNYSRREGTRGSSWSAQNTPRGNYNESRGGQSNFNRGPLPPLRPLSSTGYRPSPRDRASRGRGGLGPSWASTNSGSGGSRGKFVSGGSGRGRHVRSFTR</sequence>
<organism>
    <name type="scientific">Mus musculus</name>
    <name type="common">Mouse</name>
    <dbReference type="NCBI Taxonomy" id="10090"/>
    <lineage>
        <taxon>Eukaryota</taxon>
        <taxon>Metazoa</taxon>
        <taxon>Chordata</taxon>
        <taxon>Craniata</taxon>
        <taxon>Vertebrata</taxon>
        <taxon>Euteleostomi</taxon>
        <taxon>Mammalia</taxon>
        <taxon>Eutheria</taxon>
        <taxon>Euarchontoglires</taxon>
        <taxon>Glires</taxon>
        <taxon>Rodentia</taxon>
        <taxon>Myomorpha</taxon>
        <taxon>Muroidea</taxon>
        <taxon>Muridae</taxon>
        <taxon>Murinae</taxon>
        <taxon>Mus</taxon>
        <taxon>Mus</taxon>
    </lineage>
</organism>
<keyword id="KW-0007">Acetylation</keyword>
<keyword id="KW-0025">Alternative splicing</keyword>
<keyword id="KW-0963">Cytoplasm</keyword>
<keyword id="KW-0217">Developmental protein</keyword>
<keyword id="KW-0488">Methylation</keyword>
<keyword id="KW-0507">mRNA processing</keyword>
<keyword id="KW-0508">mRNA splicing</keyword>
<keyword id="KW-0539">Nucleus</keyword>
<keyword id="KW-0597">Phosphoprotein</keyword>
<keyword id="KW-1185">Reference proteome</keyword>
<gene>
    <name evidence="8" type="primary">Virma</name>
    <name evidence="5" type="synonym">Kiaa1429</name>
</gene>
<accession>A2AIV2</accession>
<accession>A2AIV1</accession>
<accession>Q3TDQ3</accession>
<accession>Q3TRR9</accession>
<accession>Q3U1Z2</accession>
<accession>Q80TD6</accession>
<accession>Q8C758</accession>
<accession>Q8K151</accession>
<accession>Q9CSI3</accession>
<evidence type="ECO:0000250" key="1">
    <source>
        <dbReference type="UniProtKB" id="Q69YN4"/>
    </source>
</evidence>
<evidence type="ECO:0000256" key="2">
    <source>
        <dbReference type="SAM" id="MobiDB-lite"/>
    </source>
</evidence>
<evidence type="ECO:0000269" key="3">
    <source>
    </source>
</evidence>
<evidence type="ECO:0000269" key="4">
    <source>
    </source>
</evidence>
<evidence type="ECO:0000303" key="5">
    <source>
    </source>
</evidence>
<evidence type="ECO:0000303" key="6">
    <source>
    </source>
</evidence>
<evidence type="ECO:0000305" key="7"/>
<evidence type="ECO:0000312" key="8">
    <source>
        <dbReference type="MGI" id="MGI:1913435"/>
    </source>
</evidence>
<evidence type="ECO:0007744" key="9">
    <source>
    </source>
</evidence>
<evidence type="ECO:0007744" key="10">
    <source>
    </source>
</evidence>
<evidence type="ECO:0007744" key="11">
    <source>
    </source>
</evidence>
<evidence type="ECO:0007744" key="12">
    <source>
    </source>
</evidence>
<feature type="initiator methionine" description="Removed" evidence="1">
    <location>
        <position position="1"/>
    </location>
</feature>
<feature type="chain" id="PRO_0000308606" description="Protein virilizer homolog">
    <location>
        <begin position="2"/>
        <end position="1811"/>
    </location>
</feature>
<feature type="region of interest" description="Disordered" evidence="2">
    <location>
        <begin position="132"/>
        <end position="302"/>
    </location>
</feature>
<feature type="region of interest" description="Disordered" evidence="2">
    <location>
        <begin position="1615"/>
        <end position="1634"/>
    </location>
</feature>
<feature type="region of interest" description="Disordered" evidence="2">
    <location>
        <begin position="1662"/>
        <end position="1811"/>
    </location>
</feature>
<feature type="compositionally biased region" description="Pro residues" evidence="2">
    <location>
        <begin position="139"/>
        <end position="152"/>
    </location>
</feature>
<feature type="compositionally biased region" description="Basic and acidic residues" evidence="2">
    <location>
        <begin position="160"/>
        <end position="169"/>
    </location>
</feature>
<feature type="compositionally biased region" description="Pro residues" evidence="2">
    <location>
        <begin position="174"/>
        <end position="190"/>
    </location>
</feature>
<feature type="compositionally biased region" description="Polar residues" evidence="2">
    <location>
        <begin position="224"/>
        <end position="233"/>
    </location>
</feature>
<feature type="compositionally biased region" description="Acidic residues" evidence="2">
    <location>
        <begin position="234"/>
        <end position="267"/>
    </location>
</feature>
<feature type="compositionally biased region" description="Acidic residues" evidence="2">
    <location>
        <begin position="274"/>
        <end position="302"/>
    </location>
</feature>
<feature type="compositionally biased region" description="Gly residues" evidence="2">
    <location>
        <begin position="1688"/>
        <end position="1697"/>
    </location>
</feature>
<feature type="compositionally biased region" description="Polar residues" evidence="2">
    <location>
        <begin position="1722"/>
        <end position="1747"/>
    </location>
</feature>
<feature type="compositionally biased region" description="Gly residues" evidence="2">
    <location>
        <begin position="1787"/>
        <end position="1801"/>
    </location>
</feature>
<feature type="compositionally biased region" description="Basic residues" evidence="2">
    <location>
        <begin position="1802"/>
        <end position="1811"/>
    </location>
</feature>
<feature type="modified residue" description="N-acetylalanine" evidence="1">
    <location>
        <position position="2"/>
    </location>
</feature>
<feature type="modified residue" description="Phosphoserine" evidence="1">
    <location>
        <position position="133"/>
    </location>
</feature>
<feature type="modified residue" description="Phosphoserine" evidence="10 11">
    <location>
        <position position="138"/>
    </location>
</feature>
<feature type="modified residue" description="Phosphoserine" evidence="10">
    <location>
        <position position="173"/>
    </location>
</feature>
<feature type="modified residue" description="Phosphothreonine" evidence="1">
    <location>
        <position position="184"/>
    </location>
</feature>
<feature type="modified residue" description="Phosphoserine" evidence="1">
    <location>
        <position position="222"/>
    </location>
</feature>
<feature type="modified residue" description="Phosphotyrosine" evidence="1">
    <location>
        <position position="913"/>
    </location>
</feature>
<feature type="modified residue" description="Phosphoserine" evidence="9 11">
    <location>
        <position position="1578"/>
    </location>
</feature>
<feature type="modified residue" description="Phosphothreonine" evidence="1">
    <location>
        <position position="1707"/>
    </location>
</feature>
<feature type="modified residue" description="Omega-N-methylarginine" evidence="12">
    <location>
        <position position="1722"/>
    </location>
</feature>
<feature type="modified residue" description="Asymmetric dimethylarginine; alternate" evidence="12">
    <location>
        <position position="1740"/>
    </location>
</feature>
<feature type="modified residue" description="Omega-N-methylarginine; alternate" evidence="12">
    <location>
        <position position="1740"/>
    </location>
</feature>
<feature type="modified residue" description="Asymmetric dimethylarginine" evidence="12">
    <location>
        <position position="1772"/>
    </location>
</feature>
<feature type="modified residue" description="Asymmetric dimethylarginine" evidence="12">
    <location>
        <position position="1774"/>
    </location>
</feature>
<feature type="modified residue" description="Asymmetric dimethylarginine" evidence="12">
    <location>
        <position position="1792"/>
    </location>
</feature>
<feature type="splice variant" id="VSP_029022" description="In isoform 2." evidence="6">
    <original>IEPHDISVA</original>
    <variation>PLHITCILS</variation>
    <location>
        <begin position="1131"/>
        <end position="1139"/>
    </location>
</feature>
<feature type="splice variant" id="VSP_029023" description="In isoform 2." evidence="6">
    <location>
        <begin position="1140"/>
        <end position="1811"/>
    </location>
</feature>
<feature type="sequence conflict" description="In Ref. 1; BAE41548." evidence="7" ref="1">
    <original>S</original>
    <variation>Y</variation>
    <location>
        <position position="97"/>
    </location>
</feature>
<feature type="sequence conflict" description="In Ref. 1; BAC35017." evidence="7" ref="1">
    <original>K</original>
    <variation>E</variation>
    <location>
        <position position="373"/>
    </location>
</feature>
<feature type="sequence conflict" description="In Ref. 4; AAH28830." evidence="7" ref="4">
    <original>A</original>
    <variation>T</variation>
    <location>
        <position position="1520"/>
    </location>
</feature>
<feature type="sequence conflict" description="In Ref. 4; AAH28830." evidence="7" ref="4">
    <original>S</original>
    <variation>T</variation>
    <location>
        <position position="1582"/>
    </location>
</feature>
<reference key="1">
    <citation type="journal article" date="2005" name="Science">
        <title>The transcriptional landscape of the mammalian genome.</title>
        <authorList>
            <person name="Carninci P."/>
            <person name="Kasukawa T."/>
            <person name="Katayama S."/>
            <person name="Gough J."/>
            <person name="Frith M.C."/>
            <person name="Maeda N."/>
            <person name="Oyama R."/>
            <person name="Ravasi T."/>
            <person name="Lenhard B."/>
            <person name="Wells C."/>
            <person name="Kodzius R."/>
            <person name="Shimokawa K."/>
            <person name="Bajic V.B."/>
            <person name="Brenner S.E."/>
            <person name="Batalov S."/>
            <person name="Forrest A.R."/>
            <person name="Zavolan M."/>
            <person name="Davis M.J."/>
            <person name="Wilming L.G."/>
            <person name="Aidinis V."/>
            <person name="Allen J.E."/>
            <person name="Ambesi-Impiombato A."/>
            <person name="Apweiler R."/>
            <person name="Aturaliya R.N."/>
            <person name="Bailey T.L."/>
            <person name="Bansal M."/>
            <person name="Baxter L."/>
            <person name="Beisel K.W."/>
            <person name="Bersano T."/>
            <person name="Bono H."/>
            <person name="Chalk A.M."/>
            <person name="Chiu K.P."/>
            <person name="Choudhary V."/>
            <person name="Christoffels A."/>
            <person name="Clutterbuck D.R."/>
            <person name="Crowe M.L."/>
            <person name="Dalla E."/>
            <person name="Dalrymple B.P."/>
            <person name="de Bono B."/>
            <person name="Della Gatta G."/>
            <person name="di Bernardo D."/>
            <person name="Down T."/>
            <person name="Engstrom P."/>
            <person name="Fagiolini M."/>
            <person name="Faulkner G."/>
            <person name="Fletcher C.F."/>
            <person name="Fukushima T."/>
            <person name="Furuno M."/>
            <person name="Futaki S."/>
            <person name="Gariboldi M."/>
            <person name="Georgii-Hemming P."/>
            <person name="Gingeras T.R."/>
            <person name="Gojobori T."/>
            <person name="Green R.E."/>
            <person name="Gustincich S."/>
            <person name="Harbers M."/>
            <person name="Hayashi Y."/>
            <person name="Hensch T.K."/>
            <person name="Hirokawa N."/>
            <person name="Hill D."/>
            <person name="Huminiecki L."/>
            <person name="Iacono M."/>
            <person name="Ikeo K."/>
            <person name="Iwama A."/>
            <person name="Ishikawa T."/>
            <person name="Jakt M."/>
            <person name="Kanapin A."/>
            <person name="Katoh M."/>
            <person name="Kawasawa Y."/>
            <person name="Kelso J."/>
            <person name="Kitamura H."/>
            <person name="Kitano H."/>
            <person name="Kollias G."/>
            <person name="Krishnan S.P."/>
            <person name="Kruger A."/>
            <person name="Kummerfeld S.K."/>
            <person name="Kurochkin I.V."/>
            <person name="Lareau L.F."/>
            <person name="Lazarevic D."/>
            <person name="Lipovich L."/>
            <person name="Liu J."/>
            <person name="Liuni S."/>
            <person name="McWilliam S."/>
            <person name="Madan Babu M."/>
            <person name="Madera M."/>
            <person name="Marchionni L."/>
            <person name="Matsuda H."/>
            <person name="Matsuzawa S."/>
            <person name="Miki H."/>
            <person name="Mignone F."/>
            <person name="Miyake S."/>
            <person name="Morris K."/>
            <person name="Mottagui-Tabar S."/>
            <person name="Mulder N."/>
            <person name="Nakano N."/>
            <person name="Nakauchi H."/>
            <person name="Ng P."/>
            <person name="Nilsson R."/>
            <person name="Nishiguchi S."/>
            <person name="Nishikawa S."/>
            <person name="Nori F."/>
            <person name="Ohara O."/>
            <person name="Okazaki Y."/>
            <person name="Orlando V."/>
            <person name="Pang K.C."/>
            <person name="Pavan W.J."/>
            <person name="Pavesi G."/>
            <person name="Pesole G."/>
            <person name="Petrovsky N."/>
            <person name="Piazza S."/>
            <person name="Reed J."/>
            <person name="Reid J.F."/>
            <person name="Ring B.Z."/>
            <person name="Ringwald M."/>
            <person name="Rost B."/>
            <person name="Ruan Y."/>
            <person name="Salzberg S.L."/>
            <person name="Sandelin A."/>
            <person name="Schneider C."/>
            <person name="Schoenbach C."/>
            <person name="Sekiguchi K."/>
            <person name="Semple C.A."/>
            <person name="Seno S."/>
            <person name="Sessa L."/>
            <person name="Sheng Y."/>
            <person name="Shibata Y."/>
            <person name="Shimada H."/>
            <person name="Shimada K."/>
            <person name="Silva D."/>
            <person name="Sinclair B."/>
            <person name="Sperling S."/>
            <person name="Stupka E."/>
            <person name="Sugiura K."/>
            <person name="Sultana R."/>
            <person name="Takenaka Y."/>
            <person name="Taki K."/>
            <person name="Tammoja K."/>
            <person name="Tan S.L."/>
            <person name="Tang S."/>
            <person name="Taylor M.S."/>
            <person name="Tegner J."/>
            <person name="Teichmann S.A."/>
            <person name="Ueda H.R."/>
            <person name="van Nimwegen E."/>
            <person name="Verardo R."/>
            <person name="Wei C.L."/>
            <person name="Yagi K."/>
            <person name="Yamanishi H."/>
            <person name="Zabarovsky E."/>
            <person name="Zhu S."/>
            <person name="Zimmer A."/>
            <person name="Hide W."/>
            <person name="Bult C."/>
            <person name="Grimmond S.M."/>
            <person name="Teasdale R.D."/>
            <person name="Liu E.T."/>
            <person name="Brusic V."/>
            <person name="Quackenbush J."/>
            <person name="Wahlestedt C."/>
            <person name="Mattick J.S."/>
            <person name="Hume D.A."/>
            <person name="Kai C."/>
            <person name="Sasaki D."/>
            <person name="Tomaru Y."/>
            <person name="Fukuda S."/>
            <person name="Kanamori-Katayama M."/>
            <person name="Suzuki M."/>
            <person name="Aoki J."/>
            <person name="Arakawa T."/>
            <person name="Iida J."/>
            <person name="Imamura K."/>
            <person name="Itoh M."/>
            <person name="Kato T."/>
            <person name="Kawaji H."/>
            <person name="Kawagashira N."/>
            <person name="Kawashima T."/>
            <person name="Kojima M."/>
            <person name="Kondo S."/>
            <person name="Konno H."/>
            <person name="Nakano K."/>
            <person name="Ninomiya N."/>
            <person name="Nishio T."/>
            <person name="Okada M."/>
            <person name="Plessy C."/>
            <person name="Shibata K."/>
            <person name="Shiraki T."/>
            <person name="Suzuki S."/>
            <person name="Tagami M."/>
            <person name="Waki K."/>
            <person name="Watahiki A."/>
            <person name="Okamura-Oho Y."/>
            <person name="Suzuki H."/>
            <person name="Kawai J."/>
            <person name="Hayashizaki Y."/>
        </authorList>
    </citation>
    <scope>NUCLEOTIDE SEQUENCE [LARGE SCALE MRNA] (ISOFORM 2)</scope>
    <scope>NUCLEOTIDE SEQUENCE [LARGE SCALE MRNA] OF 1-1210 AND 1737-1811 (ISOFORM 1)</scope>
    <source>
        <strain>C57BL/6J</strain>
        <strain>NOD</strain>
        <tissue>Lung</tissue>
        <tissue>Urinary bladder</tissue>
    </source>
</reference>
<reference key="2">
    <citation type="journal article" date="2009" name="PLoS Biol.">
        <title>Lineage-specific biology revealed by a finished genome assembly of the mouse.</title>
        <authorList>
            <person name="Church D.M."/>
            <person name="Goodstadt L."/>
            <person name="Hillier L.W."/>
            <person name="Zody M.C."/>
            <person name="Goldstein S."/>
            <person name="She X."/>
            <person name="Bult C.J."/>
            <person name="Agarwala R."/>
            <person name="Cherry J.L."/>
            <person name="DiCuccio M."/>
            <person name="Hlavina W."/>
            <person name="Kapustin Y."/>
            <person name="Meric P."/>
            <person name="Maglott D."/>
            <person name="Birtle Z."/>
            <person name="Marques A.C."/>
            <person name="Graves T."/>
            <person name="Zhou S."/>
            <person name="Teague B."/>
            <person name="Potamousis K."/>
            <person name="Churas C."/>
            <person name="Place M."/>
            <person name="Herschleb J."/>
            <person name="Runnheim R."/>
            <person name="Forrest D."/>
            <person name="Amos-Landgraf J."/>
            <person name="Schwartz D.C."/>
            <person name="Cheng Z."/>
            <person name="Lindblad-Toh K."/>
            <person name="Eichler E.E."/>
            <person name="Ponting C.P."/>
        </authorList>
    </citation>
    <scope>NUCLEOTIDE SEQUENCE [LARGE SCALE GENOMIC DNA]</scope>
    <source>
        <strain>C57BL/6J</strain>
    </source>
</reference>
<reference key="3">
    <citation type="journal article" date="2003" name="DNA Res.">
        <title>Prediction of the coding sequences of mouse homologues of KIAA gene: II. The complete nucleotide sequences of 400 mouse KIAA-homologous cDNAs identified by screening of terminal sequences of cDNA clones randomly sampled from size-fractionated libraries.</title>
        <authorList>
            <person name="Okazaki N."/>
            <person name="Kikuno R."/>
            <person name="Ohara R."/>
            <person name="Inamoto S."/>
            <person name="Aizawa H."/>
            <person name="Yuasa S."/>
            <person name="Nakajima D."/>
            <person name="Nagase T."/>
            <person name="Ohara O."/>
            <person name="Koga H."/>
        </authorList>
    </citation>
    <scope>NUCLEOTIDE SEQUENCE [LARGE SCALE MRNA] OF 5-1811 (ISOFORM 1)</scope>
    <source>
        <tissue>Brain</tissue>
    </source>
</reference>
<reference key="4">
    <citation type="journal article" date="2004" name="Genome Res.">
        <title>The status, quality, and expansion of the NIH full-length cDNA project: the Mammalian Gene Collection (MGC).</title>
        <authorList>
            <consortium name="The MGC Project Team"/>
        </authorList>
    </citation>
    <scope>NUCLEOTIDE SEQUENCE [LARGE SCALE MRNA] OF 1421-1811 (ISOFORM 1)</scope>
    <source>
        <strain>FVB/N</strain>
        <tissue>Liver</tissue>
    </source>
</reference>
<reference key="5">
    <citation type="journal article" date="2007" name="Proc. Natl. Acad. Sci. U.S.A.">
        <title>Large-scale phosphorylation analysis of mouse liver.</title>
        <authorList>
            <person name="Villen J."/>
            <person name="Beausoleil S.A."/>
            <person name="Gerber S.A."/>
            <person name="Gygi S.P."/>
        </authorList>
    </citation>
    <scope>PHOSPHORYLATION [LARGE SCALE ANALYSIS] AT SER-1578</scope>
    <scope>IDENTIFICATION BY MASS SPECTROMETRY [LARGE SCALE ANALYSIS]</scope>
    <source>
        <tissue>Liver</tissue>
    </source>
</reference>
<reference key="6">
    <citation type="journal article" date="2009" name="Immunity">
        <title>The phagosomal proteome in interferon-gamma-activated macrophages.</title>
        <authorList>
            <person name="Trost M."/>
            <person name="English L."/>
            <person name="Lemieux S."/>
            <person name="Courcelles M."/>
            <person name="Desjardins M."/>
            <person name="Thibault P."/>
        </authorList>
    </citation>
    <scope>PHOSPHORYLATION [LARGE SCALE ANALYSIS] AT SER-138 AND SER-173</scope>
    <scope>IDENTIFICATION BY MASS SPECTROMETRY [LARGE SCALE ANALYSIS]</scope>
</reference>
<reference key="7">
    <citation type="journal article" date="2010" name="Cell">
        <title>A tissue-specific atlas of mouse protein phosphorylation and expression.</title>
        <authorList>
            <person name="Huttlin E.L."/>
            <person name="Jedrychowski M.P."/>
            <person name="Elias J.E."/>
            <person name="Goswami T."/>
            <person name="Rad R."/>
            <person name="Beausoleil S.A."/>
            <person name="Villen J."/>
            <person name="Haas W."/>
            <person name="Sowa M.E."/>
            <person name="Gygi S.P."/>
        </authorList>
    </citation>
    <scope>PHOSPHORYLATION [LARGE SCALE ANALYSIS] AT SER-138 AND SER-1578</scope>
    <scope>IDENTIFICATION BY MASS SPECTROMETRY [LARGE SCALE ANALYSIS]</scope>
    <source>
        <tissue>Brain</tissue>
        <tissue>Brown adipose tissue</tissue>
        <tissue>Kidney</tissue>
        <tissue>Liver</tissue>
        <tissue>Lung</tissue>
        <tissue>Pancreas</tissue>
        <tissue>Spleen</tissue>
        <tissue>Testis</tissue>
    </source>
</reference>
<reference key="8">
    <citation type="journal article" date="2014" name="Mol. Cell. Proteomics">
        <title>Immunoaffinity enrichment and mass spectrometry analysis of protein methylation.</title>
        <authorList>
            <person name="Guo A."/>
            <person name="Gu H."/>
            <person name="Zhou J."/>
            <person name="Mulhern D."/>
            <person name="Wang Y."/>
            <person name="Lee K.A."/>
            <person name="Yang V."/>
            <person name="Aguiar M."/>
            <person name="Kornhauser J."/>
            <person name="Jia X."/>
            <person name="Ren J."/>
            <person name="Beausoleil S.A."/>
            <person name="Silva J.C."/>
            <person name="Vemulapalli V."/>
            <person name="Bedford M.T."/>
            <person name="Comb M.J."/>
        </authorList>
    </citation>
    <scope>METHYLATION [LARGE SCALE ANALYSIS] AT ARG-1722; ARG-1740; ARG-1772; ARG-1774 AND ARG-1792</scope>
    <scope>IDENTIFICATION BY MASS SPECTROMETRY [LARGE SCALE ANALYSIS]</scope>
    <source>
        <tissue>Brain</tissue>
        <tissue>Embryo</tissue>
    </source>
</reference>
<reference key="9">
    <citation type="journal article" date="2018" name="Genes Dev.">
        <title>Zc3h13/Flacc is required for adenosine methylation by bridging the mRNA-binding factor Rbm15/Spenito to the m6A machinery component Wtap/Fl(2)d.</title>
        <authorList>
            <person name="Knuckles P."/>
            <person name="Lence T."/>
            <person name="Haussmann I.U."/>
            <person name="Jacob D."/>
            <person name="Kreim N."/>
            <person name="Carl S.H."/>
            <person name="Masiello I."/>
            <person name="Hares T."/>
            <person name="Villasenor R."/>
            <person name="Hess D."/>
            <person name="Andrade-Navarro M.A."/>
            <person name="Biggiogera M."/>
            <person name="Helm M."/>
            <person name="Soller M."/>
            <person name="Buehler M."/>
            <person name="Roignant J.Y."/>
        </authorList>
    </citation>
    <scope>IDENTIFICATION IN THE WMM COMPLEX</scope>
</reference>
<reference key="10">
    <citation type="journal article" date="2018" name="Mol. Cell">
        <title>Zc3h13 regulates nuclear RNA m6A methylation and mouse embryonic stem cell self-renewal.</title>
        <authorList>
            <person name="Wen J."/>
            <person name="Lv R."/>
            <person name="Ma H."/>
            <person name="Shen H."/>
            <person name="He C."/>
            <person name="Wang J."/>
            <person name="Jiao F."/>
            <person name="Liu H."/>
            <person name="Yang P."/>
            <person name="Tan L."/>
            <person name="Lan F."/>
            <person name="Shi Y.G."/>
            <person name="He C."/>
            <person name="Shi Y."/>
            <person name="Diao J."/>
        </authorList>
    </citation>
    <scope>IDENTIFICATION IN THE WMM COMPLEX</scope>
    <scope>SUBCELLULAR LOCATION</scope>
</reference>
<protein>
    <recommendedName>
        <fullName evidence="7">Protein virilizer homolog</fullName>
    </recommendedName>
</protein>
<name>VIR_MOUSE</name>
<comment type="function">
    <text evidence="1">Associated component of the WMM complex, a complex that mediates N6-methyladenosine (m6A) methylation of RNAs, a modification that plays a role in the efficiency of mRNA splicing and RNA processing. Acts as a key regulator of m6A methylation by promoting m6A methylation of mRNAs in the 3'-UTR near the stop codon: recruits the catalytic core components METTL3 and METTL14, thereby guiding m6A methylation at specific sites. Required for mRNA polyadenylation via its role in selective m6A methylation: m6A methylation of mRNAs in the 3'-UTR near the stop codon correlating with alternative polyadenylation (APA).</text>
</comment>
<comment type="subunit">
    <text evidence="1 3 4">Component of the WMM complex, a N6-methyltransferase complex composed of a catalytic subcomplex, named MAC, and of an associated subcomplex, named MACOM (PubMed:29535189, PubMed:29547716). The MAC subcomplex is composed of METTL3 and METTL14 (PubMed:29535189, PubMed:29547716). The MACOM subcomplex is composed of WTAP, ZC3H13, CBLL1/HAKAI, VIRMA, and, in some cases of RBM15 (RBM15 or RBM15B) (PubMed:29535189, PubMed:29547716). Interacts with WTAP (By similarity). Also a component of a MACOM-like complex, named WTAP complex, composed of WTAP, ZC3H13, CBLL1, VIRMA, RBM15, BCLAF1 and THRAP3 (By similarity). Interacts with NUDT21 and CPSF6 (By similarity).</text>
</comment>
<comment type="subcellular location">
    <subcellularLocation>
        <location evidence="1">Nucleus speckle</location>
    </subcellularLocation>
    <subcellularLocation>
        <location evidence="4">Nucleus</location>
        <location evidence="4">Nucleoplasm</location>
    </subcellularLocation>
    <subcellularLocation>
        <location evidence="4">Cytoplasm</location>
    </subcellularLocation>
    <text evidence="4">Mainly nuclear with some fraction located in the cytoplasm (PubMed:29547716). ZC3H13 is required to anchor component of the MACOM subcomplex, such as VIRMA, in the nucleus (PubMed:29547716).</text>
</comment>
<comment type="alternative products">
    <event type="alternative splicing"/>
    <isoform>
        <id>A2AIV2-1</id>
        <name>1</name>
        <sequence type="displayed"/>
    </isoform>
    <isoform>
        <id>A2AIV2-2</id>
        <name>2</name>
        <sequence type="described" ref="VSP_029022 VSP_029023"/>
    </isoform>
</comment>
<comment type="similarity">
    <text evidence="7">Belongs to the vir family.</text>
</comment>
<comment type="sequence caution" evidence="7">
    <conflict type="erroneous initiation">
        <sequence resource="EMBL-CDS" id="AAH28830"/>
    </conflict>
</comment>
<dbReference type="EMBL" id="AK012768">
    <property type="protein sequence ID" value="BAB28456.1"/>
    <property type="molecule type" value="mRNA"/>
</dbReference>
<dbReference type="EMBL" id="AK052499">
    <property type="protein sequence ID" value="BAC35017.2"/>
    <property type="molecule type" value="mRNA"/>
</dbReference>
<dbReference type="EMBL" id="AK155623">
    <property type="protein sequence ID" value="BAE33351.1"/>
    <property type="molecule type" value="mRNA"/>
</dbReference>
<dbReference type="EMBL" id="AK162531">
    <property type="protein sequence ID" value="BAE36958.1"/>
    <property type="molecule type" value="mRNA"/>
</dbReference>
<dbReference type="EMBL" id="AK170075">
    <property type="protein sequence ID" value="BAE41548.1"/>
    <property type="molecule type" value="mRNA"/>
</dbReference>
<dbReference type="EMBL" id="AL732538">
    <property type="status" value="NOT_ANNOTATED_CDS"/>
    <property type="molecule type" value="Genomic_DNA"/>
</dbReference>
<dbReference type="EMBL" id="AL772170">
    <property type="status" value="NOT_ANNOTATED_CDS"/>
    <property type="molecule type" value="Genomic_DNA"/>
</dbReference>
<dbReference type="EMBL" id="AK122509">
    <property type="protein sequence ID" value="BAC65791.1"/>
    <property type="molecule type" value="mRNA"/>
</dbReference>
<dbReference type="EMBL" id="BC028830">
    <property type="protein sequence ID" value="AAH28830.1"/>
    <property type="status" value="ALT_INIT"/>
    <property type="molecule type" value="mRNA"/>
</dbReference>
<dbReference type="CCDS" id="CCDS84705.1">
    <molecule id="A2AIV2-1"/>
</dbReference>
<dbReference type="RefSeq" id="NP_001333984.1">
    <molecule id="A2AIV2-1"/>
    <property type="nucleotide sequence ID" value="NM_001347055.1"/>
</dbReference>
<dbReference type="SMR" id="A2AIV2"/>
<dbReference type="BioGRID" id="211281">
    <property type="interactions" value="27"/>
</dbReference>
<dbReference type="ComplexPortal" id="CPX-1609">
    <property type="entry name" value="WMM N6-adenosine-methyltransferase complex"/>
</dbReference>
<dbReference type="CORUM" id="A2AIV2"/>
<dbReference type="FunCoup" id="A2AIV2">
    <property type="interactions" value="5711"/>
</dbReference>
<dbReference type="IntAct" id="A2AIV2">
    <property type="interactions" value="2"/>
</dbReference>
<dbReference type="STRING" id="10090.ENSMUSP00000103943"/>
<dbReference type="GlyGen" id="A2AIV2">
    <property type="glycosylation" value="4 sites, 2 N-linked glycans (2 sites), 1 O-linked glycan (2 sites)"/>
</dbReference>
<dbReference type="iPTMnet" id="A2AIV2"/>
<dbReference type="PhosphoSitePlus" id="A2AIV2"/>
<dbReference type="jPOST" id="A2AIV2"/>
<dbReference type="PaxDb" id="10090-ENSMUSP00000103943"/>
<dbReference type="PeptideAtlas" id="A2AIV2"/>
<dbReference type="ProteomicsDB" id="297600">
    <molecule id="A2AIV2-1"/>
</dbReference>
<dbReference type="ProteomicsDB" id="297601">
    <molecule id="A2AIV2-2"/>
</dbReference>
<dbReference type="Pumba" id="A2AIV2"/>
<dbReference type="Antibodypedia" id="25815">
    <property type="antibodies" value="54 antibodies from 18 providers"/>
</dbReference>
<dbReference type="Ensembl" id="ENSMUST00000055372.14">
    <molecule id="A2AIV2-2"/>
    <property type="protein sequence ID" value="ENSMUSP00000063188.8"/>
    <property type="gene ID" value="ENSMUSG00000040720.16"/>
</dbReference>
<dbReference type="Ensembl" id="ENSMUST00000059914.13">
    <molecule id="A2AIV2-1"/>
    <property type="protein sequence ID" value="ENSMUSP00000058078.7"/>
    <property type="gene ID" value="ENSMUSG00000040720.16"/>
</dbReference>
<dbReference type="GeneID" id="66185"/>
<dbReference type="KEGG" id="mmu:66185"/>
<dbReference type="UCSC" id="uc008rzo.1">
    <molecule id="A2AIV2-2"/>
    <property type="organism name" value="mouse"/>
</dbReference>
<dbReference type="UCSC" id="uc008rzq.1">
    <molecule id="A2AIV2-1"/>
    <property type="organism name" value="mouse"/>
</dbReference>
<dbReference type="AGR" id="MGI:1913435"/>
<dbReference type="CTD" id="25962"/>
<dbReference type="MGI" id="MGI:1913435">
    <property type="gene designation" value="Virma"/>
</dbReference>
<dbReference type="VEuPathDB" id="HostDB:ENSMUSG00000040720"/>
<dbReference type="eggNOG" id="KOG4822">
    <property type="taxonomic scope" value="Eukaryota"/>
</dbReference>
<dbReference type="GeneTree" id="ENSGT00390000002833"/>
<dbReference type="HOGENOM" id="CLU_254686_0_0_1"/>
<dbReference type="InParanoid" id="A2AIV2"/>
<dbReference type="OrthoDB" id="2011702at2759"/>
<dbReference type="PhylomeDB" id="A2AIV2"/>
<dbReference type="BioGRID-ORCS" id="66185">
    <property type="hits" value="27 hits in 80 CRISPR screens"/>
</dbReference>
<dbReference type="ChiTaRS" id="1110037F02Rik">
    <property type="organism name" value="mouse"/>
</dbReference>
<dbReference type="PRO" id="PR:A2AIV2"/>
<dbReference type="Proteomes" id="UP000000589">
    <property type="component" value="Chromosome 4"/>
</dbReference>
<dbReference type="RNAct" id="A2AIV2">
    <property type="molecule type" value="protein"/>
</dbReference>
<dbReference type="Bgee" id="ENSMUSG00000040720">
    <property type="expression patterns" value="Expressed in humerus cartilage element and 260 other cell types or tissues"/>
</dbReference>
<dbReference type="ExpressionAtlas" id="A2AIV2">
    <property type="expression patterns" value="baseline and differential"/>
</dbReference>
<dbReference type="GO" id="GO:0005737">
    <property type="term" value="C:cytoplasm"/>
    <property type="evidence" value="ECO:0000314"/>
    <property type="project" value="UniProtKB"/>
</dbReference>
<dbReference type="GO" id="GO:0005829">
    <property type="term" value="C:cytosol"/>
    <property type="evidence" value="ECO:0007669"/>
    <property type="project" value="Ensembl"/>
</dbReference>
<dbReference type="GO" id="GO:0016607">
    <property type="term" value="C:nuclear speck"/>
    <property type="evidence" value="ECO:0000250"/>
    <property type="project" value="UniProtKB"/>
</dbReference>
<dbReference type="GO" id="GO:0005654">
    <property type="term" value="C:nucleoplasm"/>
    <property type="evidence" value="ECO:0000250"/>
    <property type="project" value="UniProtKB"/>
</dbReference>
<dbReference type="GO" id="GO:0005634">
    <property type="term" value="C:nucleus"/>
    <property type="evidence" value="ECO:0000314"/>
    <property type="project" value="UniProtKB"/>
</dbReference>
<dbReference type="GO" id="GO:0036396">
    <property type="term" value="C:RNA N6-methyladenosine methyltransferase complex"/>
    <property type="evidence" value="ECO:0000314"/>
    <property type="project" value="UniProtKB"/>
</dbReference>
<dbReference type="GO" id="GO:0006397">
    <property type="term" value="P:mRNA processing"/>
    <property type="evidence" value="ECO:0000250"/>
    <property type="project" value="UniProtKB"/>
</dbReference>
<dbReference type="GO" id="GO:0008380">
    <property type="term" value="P:RNA splicing"/>
    <property type="evidence" value="ECO:0007669"/>
    <property type="project" value="UniProtKB-KW"/>
</dbReference>
<dbReference type="InterPro" id="IPR031801">
    <property type="entry name" value="VIR_N"/>
</dbReference>
<dbReference type="InterPro" id="IPR026736">
    <property type="entry name" value="Virilizer"/>
</dbReference>
<dbReference type="PANTHER" id="PTHR23185">
    <property type="entry name" value="PROTEIN VIRILIZER HOMOLOG"/>
    <property type="match status" value="1"/>
</dbReference>
<dbReference type="PANTHER" id="PTHR23185:SF0">
    <property type="entry name" value="PROTEIN VIRILIZER HOMOLOG"/>
    <property type="match status" value="1"/>
</dbReference>
<dbReference type="Pfam" id="PF15912">
    <property type="entry name" value="VIR_N"/>
    <property type="match status" value="1"/>
</dbReference>
<proteinExistence type="evidence at protein level"/>